<evidence type="ECO:0000255" key="1">
    <source>
        <dbReference type="HAMAP-Rule" id="MF_03037"/>
    </source>
</evidence>
<feature type="chain" id="PRO_0000382477" description="Probable cytosolic iron-sulfur protein assembly protein ciao1-A">
    <location>
        <begin position="1"/>
        <end position="330"/>
    </location>
</feature>
<feature type="repeat" description="WD 1">
    <location>
        <begin position="14"/>
        <end position="53"/>
    </location>
</feature>
<feature type="repeat" description="WD 2">
    <location>
        <begin position="59"/>
        <end position="98"/>
    </location>
</feature>
<feature type="repeat" description="WD 3">
    <location>
        <begin position="103"/>
        <end position="142"/>
    </location>
</feature>
<feature type="repeat" description="WD 4">
    <location>
        <begin position="148"/>
        <end position="187"/>
    </location>
</feature>
<feature type="repeat" description="WD 5">
    <location>
        <begin position="192"/>
        <end position="231"/>
    </location>
</feature>
<feature type="repeat" description="WD 6">
    <location>
        <begin position="243"/>
        <end position="282"/>
    </location>
</feature>
<feature type="repeat" description="WD 7">
    <location>
        <begin position="294"/>
        <end position="330"/>
    </location>
</feature>
<sequence>MKDTLALLQKFNAHPDSRCWYVAWNPKGTLLASCGGDRAIRIWGREGDSWECKTVLQDGHQRAVRKVAWSPCGNYLASASFDATTCIWKKKNDDFECLTVLEGHENEVKCVAWAPSGNQLATCSRDKSVWIWEVDEEDEYECVSVVNSHTQDVKHVVWHPTQELLASCSYDNNVCVYKEEDDDWECRATLEGHTSTVWGLTFDPSGQRLASCSDDRTVKIWKECQPGGGQDTAWKCVCTLSGFHGRTVYDIAWCPLTGALATACGDDGVRVFKEDETADPDQPVFSLSAHVPKAHSQDVNCIAWHPKEAGLLVSCSDNGEIAVWNYQSEV</sequence>
<gene>
    <name type="primary">ciao1a</name>
</gene>
<dbReference type="EMBL" id="BT047761">
    <property type="protein sequence ID" value="ACI67562.1"/>
    <property type="molecule type" value="mRNA"/>
</dbReference>
<dbReference type="SMR" id="B5X9P2"/>
<dbReference type="STRING" id="8030.ENSSSAP00000082324"/>
<dbReference type="PaxDb" id="8030-ENSSSAP00000082324"/>
<dbReference type="Ensembl" id="ENSSSAT00020189815">
    <property type="protein sequence ID" value="ENSSSAP00020143460"/>
    <property type="gene ID" value="ENSSSAG00020079768"/>
</dbReference>
<dbReference type="Ensembl" id="ENSSSAT00070051943">
    <property type="protein sequence ID" value="ENSSSAP00070049812"/>
    <property type="gene ID" value="ENSSSAG00070032383"/>
</dbReference>
<dbReference type="Ensembl" id="ENSSSAT00075110178">
    <property type="protein sequence ID" value="ENSSSAP00075081278"/>
    <property type="gene ID" value="ENSSSAG00075052332"/>
</dbReference>
<dbReference type="GeneID" id="106579887"/>
<dbReference type="KEGG" id="sasa:106579887"/>
<dbReference type="OMA" id="IREIRWS"/>
<dbReference type="OrthoDB" id="87766at7898"/>
<dbReference type="Proteomes" id="UP000087266">
    <property type="component" value="Chromosome ssa20"/>
</dbReference>
<dbReference type="Bgee" id="ENSSSAG00000067814">
    <property type="expression patterns" value="Expressed in midgut and 24 other cell types or tissues"/>
</dbReference>
<dbReference type="GO" id="GO:0097361">
    <property type="term" value="C:cytosolic [4Fe-4S] assembly targeting complex"/>
    <property type="evidence" value="ECO:0000250"/>
    <property type="project" value="UniProtKB"/>
</dbReference>
<dbReference type="GO" id="GO:0016226">
    <property type="term" value="P:iron-sulfur cluster assembly"/>
    <property type="evidence" value="ECO:0007669"/>
    <property type="project" value="UniProtKB-UniRule"/>
</dbReference>
<dbReference type="GO" id="GO:0051604">
    <property type="term" value="P:protein maturation"/>
    <property type="evidence" value="ECO:0000250"/>
    <property type="project" value="UniProtKB"/>
</dbReference>
<dbReference type="CDD" id="cd00200">
    <property type="entry name" value="WD40"/>
    <property type="match status" value="1"/>
</dbReference>
<dbReference type="FunFam" id="2.130.10.10:FF:000136">
    <property type="entry name" value="Probable cytosolic iron-sulfur protein assembly protein CIAO1"/>
    <property type="match status" value="1"/>
</dbReference>
<dbReference type="Gene3D" id="2.130.10.10">
    <property type="entry name" value="YVTN repeat-like/Quinoprotein amine dehydrogenase"/>
    <property type="match status" value="1"/>
</dbReference>
<dbReference type="HAMAP" id="MF_03037">
    <property type="entry name" value="ciao1"/>
    <property type="match status" value="1"/>
</dbReference>
<dbReference type="InterPro" id="IPR028608">
    <property type="entry name" value="CIAO1/Cia1"/>
</dbReference>
<dbReference type="InterPro" id="IPR015943">
    <property type="entry name" value="WD40/YVTN_repeat-like_dom_sf"/>
</dbReference>
<dbReference type="InterPro" id="IPR019775">
    <property type="entry name" value="WD40_repeat_CS"/>
</dbReference>
<dbReference type="InterPro" id="IPR036322">
    <property type="entry name" value="WD40_repeat_dom_sf"/>
</dbReference>
<dbReference type="InterPro" id="IPR001680">
    <property type="entry name" value="WD40_rpt"/>
</dbReference>
<dbReference type="PANTHER" id="PTHR19920:SF0">
    <property type="entry name" value="CYTOSOLIC IRON-SULFUR PROTEIN ASSEMBLY PROTEIN CIAO1-RELATED"/>
    <property type="match status" value="1"/>
</dbReference>
<dbReference type="PANTHER" id="PTHR19920">
    <property type="entry name" value="WD40 PROTEIN CIAO1"/>
    <property type="match status" value="1"/>
</dbReference>
<dbReference type="Pfam" id="PF23389">
    <property type="entry name" value="Beta-prop_WDR19_1st"/>
    <property type="match status" value="1"/>
</dbReference>
<dbReference type="Pfam" id="PF00400">
    <property type="entry name" value="WD40"/>
    <property type="match status" value="2"/>
</dbReference>
<dbReference type="SMART" id="SM00320">
    <property type="entry name" value="WD40"/>
    <property type="match status" value="7"/>
</dbReference>
<dbReference type="SUPFAM" id="SSF50978">
    <property type="entry name" value="WD40 repeat-like"/>
    <property type="match status" value="1"/>
</dbReference>
<dbReference type="PROSITE" id="PS00678">
    <property type="entry name" value="WD_REPEATS_1"/>
    <property type="match status" value="1"/>
</dbReference>
<dbReference type="PROSITE" id="PS50082">
    <property type="entry name" value="WD_REPEATS_2"/>
    <property type="match status" value="6"/>
</dbReference>
<dbReference type="PROSITE" id="PS50294">
    <property type="entry name" value="WD_REPEATS_REGION"/>
    <property type="match status" value="1"/>
</dbReference>
<name>CIO1A_SALSA</name>
<protein>
    <recommendedName>
        <fullName evidence="1">Probable cytosolic iron-sulfur protein assembly protein ciao1-A</fullName>
    </recommendedName>
    <alternativeName>
        <fullName evidence="1">WD repeat-containing protein 39-A</fullName>
    </alternativeName>
</protein>
<accession>B5X9P2</accession>
<reference key="1">
    <citation type="journal article" date="2010" name="BMC Genomics">
        <title>Salmo salar and Esox lucius full-length cDNA sequences reveal changes in evolutionary pressures on a post-tetraploidization genome.</title>
        <authorList>
            <person name="Leong J.S."/>
            <person name="Jantzen S.G."/>
            <person name="von Schalburg K.R."/>
            <person name="Cooper G.A."/>
            <person name="Messmer A.M."/>
            <person name="Liao N.Y."/>
            <person name="Munro S."/>
            <person name="Moore R."/>
            <person name="Holt R.A."/>
            <person name="Jones S.J."/>
            <person name="Davidson W.S."/>
            <person name="Koop B.F."/>
        </authorList>
    </citation>
    <scope>NUCLEOTIDE SEQUENCE [LARGE SCALE MRNA]</scope>
    <source>
        <tissue>Thyroid</tissue>
    </source>
</reference>
<comment type="function">
    <text evidence="1">Key component of the cytosolic iron-sulfur protein assembly (CIA) complex, a multiprotein complex that mediates the incorporation of iron-sulfur cluster into extramitochondrial Fe/S proteins.</text>
</comment>
<comment type="subunit">
    <text evidence="1">Component of the CIA complex.</text>
</comment>
<comment type="similarity">
    <text evidence="1">Belongs to the WD repeat CIA1 family.</text>
</comment>
<organism>
    <name type="scientific">Salmo salar</name>
    <name type="common">Atlantic salmon</name>
    <dbReference type="NCBI Taxonomy" id="8030"/>
    <lineage>
        <taxon>Eukaryota</taxon>
        <taxon>Metazoa</taxon>
        <taxon>Chordata</taxon>
        <taxon>Craniata</taxon>
        <taxon>Vertebrata</taxon>
        <taxon>Euteleostomi</taxon>
        <taxon>Actinopterygii</taxon>
        <taxon>Neopterygii</taxon>
        <taxon>Teleostei</taxon>
        <taxon>Protacanthopterygii</taxon>
        <taxon>Salmoniformes</taxon>
        <taxon>Salmonidae</taxon>
        <taxon>Salmoninae</taxon>
        <taxon>Salmo</taxon>
    </lineage>
</organism>
<proteinExistence type="evidence at transcript level"/>
<keyword id="KW-1185">Reference proteome</keyword>
<keyword id="KW-0677">Repeat</keyword>
<keyword id="KW-0853">WD repeat</keyword>